<name>ASSY_NEIM0</name>
<reference key="1">
    <citation type="journal article" date="2008" name="Genomics">
        <title>Characterization of ST-4821 complex, a unique Neisseria meningitidis clone.</title>
        <authorList>
            <person name="Peng J."/>
            <person name="Yang L."/>
            <person name="Yang F."/>
            <person name="Yang J."/>
            <person name="Yan Y."/>
            <person name="Nie H."/>
            <person name="Zhang X."/>
            <person name="Xiong Z."/>
            <person name="Jiang Y."/>
            <person name="Cheng F."/>
            <person name="Xu X."/>
            <person name="Chen S."/>
            <person name="Sun L."/>
            <person name="Li W."/>
            <person name="Shen Y."/>
            <person name="Shao Z."/>
            <person name="Liang X."/>
            <person name="Xu J."/>
            <person name="Jin Q."/>
        </authorList>
    </citation>
    <scope>NUCLEOTIDE SEQUENCE [LARGE SCALE GENOMIC DNA]</scope>
    <source>
        <strain>053442</strain>
    </source>
</reference>
<comment type="catalytic activity">
    <reaction evidence="1">
        <text>L-citrulline + L-aspartate + ATP = 2-(N(omega)-L-arginino)succinate + AMP + diphosphate + H(+)</text>
        <dbReference type="Rhea" id="RHEA:10932"/>
        <dbReference type="ChEBI" id="CHEBI:15378"/>
        <dbReference type="ChEBI" id="CHEBI:29991"/>
        <dbReference type="ChEBI" id="CHEBI:30616"/>
        <dbReference type="ChEBI" id="CHEBI:33019"/>
        <dbReference type="ChEBI" id="CHEBI:57472"/>
        <dbReference type="ChEBI" id="CHEBI:57743"/>
        <dbReference type="ChEBI" id="CHEBI:456215"/>
        <dbReference type="EC" id="6.3.4.5"/>
    </reaction>
</comment>
<comment type="pathway">
    <text evidence="1">Amino-acid biosynthesis; L-arginine biosynthesis; L-arginine from L-ornithine and carbamoyl phosphate: step 2/3.</text>
</comment>
<comment type="subunit">
    <text evidence="1">Homotetramer.</text>
</comment>
<comment type="subcellular location">
    <subcellularLocation>
        <location evidence="1">Cytoplasm</location>
    </subcellularLocation>
</comment>
<comment type="similarity">
    <text evidence="1">Belongs to the argininosuccinate synthase family. Type 2 subfamily.</text>
</comment>
<accession>A9M4B1</accession>
<evidence type="ECO:0000255" key="1">
    <source>
        <dbReference type="HAMAP-Rule" id="MF_00581"/>
    </source>
</evidence>
<sequence>MSQNHTILQSLPVGQKVGIAFSGGLDTSAALLWMKLKGALPYAYTANLGQPDEDDYNAIPKKAMEYGAENARLIDCRAQLAHEGIAAIQCGAFHVSTGGIAYFNTTPLGRAVTGTMLVSAMKEDDVNIWGDGSTYKGNDIERFYRYGLLTNPALKIYKPWLDQQFIDELGGRHEMSEFLIANGFNYKMSVEKAYSTDSNMLGATHEAKDLEFLNSGIKIVKPIMGVAFWDENVEVSPEEVSVRFEEGVPVALNGKEYADPVELFLEANRIGGRHGLGMSDQIENRIIEAKSRGIYEAPGMALFHIAYERLVTGIHNEDTIEQYRINGLRLGRLLYQGRWFDSQALMLRETAQRWVAKAITGEVTLELRRGNDYSILNTESPNLTYQPERLSMEKVEDAAFTPLDRIGQLTMRNLDITDTRAKLGIYSQSGLLSLGEGSVLPQLGNKQ</sequence>
<dbReference type="EC" id="6.3.4.5" evidence="1"/>
<dbReference type="EMBL" id="CP000381">
    <property type="protein sequence ID" value="ABX74205.1"/>
    <property type="molecule type" value="Genomic_DNA"/>
</dbReference>
<dbReference type="RefSeq" id="WP_012222162.1">
    <property type="nucleotide sequence ID" value="NC_010120.1"/>
</dbReference>
<dbReference type="SMR" id="A9M4B1"/>
<dbReference type="KEGG" id="nmn:NMCC_2087"/>
<dbReference type="HOGENOM" id="CLU_032784_4_1_4"/>
<dbReference type="UniPathway" id="UPA00068">
    <property type="reaction ID" value="UER00113"/>
</dbReference>
<dbReference type="Proteomes" id="UP000001177">
    <property type="component" value="Chromosome"/>
</dbReference>
<dbReference type="GO" id="GO:0005737">
    <property type="term" value="C:cytoplasm"/>
    <property type="evidence" value="ECO:0007669"/>
    <property type="project" value="UniProtKB-SubCell"/>
</dbReference>
<dbReference type="GO" id="GO:0004055">
    <property type="term" value="F:argininosuccinate synthase activity"/>
    <property type="evidence" value="ECO:0007669"/>
    <property type="project" value="UniProtKB-UniRule"/>
</dbReference>
<dbReference type="GO" id="GO:0005524">
    <property type="term" value="F:ATP binding"/>
    <property type="evidence" value="ECO:0007669"/>
    <property type="project" value="UniProtKB-UniRule"/>
</dbReference>
<dbReference type="GO" id="GO:0042803">
    <property type="term" value="F:protein homodimerization activity"/>
    <property type="evidence" value="ECO:0007669"/>
    <property type="project" value="InterPro"/>
</dbReference>
<dbReference type="GO" id="GO:0000053">
    <property type="term" value="P:argininosuccinate metabolic process"/>
    <property type="evidence" value="ECO:0007669"/>
    <property type="project" value="TreeGrafter"/>
</dbReference>
<dbReference type="GO" id="GO:0006526">
    <property type="term" value="P:L-arginine biosynthetic process"/>
    <property type="evidence" value="ECO:0007669"/>
    <property type="project" value="UniProtKB-UniRule"/>
</dbReference>
<dbReference type="GO" id="GO:0000050">
    <property type="term" value="P:urea cycle"/>
    <property type="evidence" value="ECO:0007669"/>
    <property type="project" value="TreeGrafter"/>
</dbReference>
<dbReference type="CDD" id="cd01999">
    <property type="entry name" value="ASS"/>
    <property type="match status" value="1"/>
</dbReference>
<dbReference type="FunFam" id="1.10.287.400:FF:000001">
    <property type="entry name" value="Argininosuccinate synthase"/>
    <property type="match status" value="1"/>
</dbReference>
<dbReference type="Gene3D" id="1.10.287.400">
    <property type="match status" value="1"/>
</dbReference>
<dbReference type="Gene3D" id="3.90.1260.10">
    <property type="entry name" value="Argininosuccinate synthetase, chain A, domain 2"/>
    <property type="match status" value="1"/>
</dbReference>
<dbReference type="Gene3D" id="3.40.50.620">
    <property type="entry name" value="HUPs"/>
    <property type="match status" value="1"/>
</dbReference>
<dbReference type="HAMAP" id="MF_00581">
    <property type="entry name" value="Arg_succ_synth_type2"/>
    <property type="match status" value="1"/>
</dbReference>
<dbReference type="InterPro" id="IPR023437">
    <property type="entry name" value="Arg_succ_synth_type2_subfam"/>
</dbReference>
<dbReference type="InterPro" id="IPR048268">
    <property type="entry name" value="Arginosuc_syn_C"/>
</dbReference>
<dbReference type="InterPro" id="IPR048267">
    <property type="entry name" value="Arginosuc_syn_N"/>
</dbReference>
<dbReference type="InterPro" id="IPR001518">
    <property type="entry name" value="Arginosuc_synth"/>
</dbReference>
<dbReference type="InterPro" id="IPR018223">
    <property type="entry name" value="Arginosuc_synth_CS"/>
</dbReference>
<dbReference type="InterPro" id="IPR023434">
    <property type="entry name" value="Arginosuc_synth_type_1_subfam"/>
</dbReference>
<dbReference type="InterPro" id="IPR024074">
    <property type="entry name" value="AS_cat/multimer_dom_body"/>
</dbReference>
<dbReference type="InterPro" id="IPR024073">
    <property type="entry name" value="AS_multimer_C_tail"/>
</dbReference>
<dbReference type="InterPro" id="IPR014729">
    <property type="entry name" value="Rossmann-like_a/b/a_fold"/>
</dbReference>
<dbReference type="NCBIfam" id="TIGR00032">
    <property type="entry name" value="argG"/>
    <property type="match status" value="1"/>
</dbReference>
<dbReference type="NCBIfam" id="NF003779">
    <property type="entry name" value="PRK05370.1"/>
    <property type="match status" value="1"/>
</dbReference>
<dbReference type="PANTHER" id="PTHR11587">
    <property type="entry name" value="ARGININOSUCCINATE SYNTHASE"/>
    <property type="match status" value="1"/>
</dbReference>
<dbReference type="PANTHER" id="PTHR11587:SF2">
    <property type="entry name" value="ARGININOSUCCINATE SYNTHASE"/>
    <property type="match status" value="1"/>
</dbReference>
<dbReference type="Pfam" id="PF20979">
    <property type="entry name" value="Arginosuc_syn_C"/>
    <property type="match status" value="1"/>
</dbReference>
<dbReference type="Pfam" id="PF00764">
    <property type="entry name" value="Arginosuc_synth"/>
    <property type="match status" value="1"/>
</dbReference>
<dbReference type="SUPFAM" id="SSF52402">
    <property type="entry name" value="Adenine nucleotide alpha hydrolases-like"/>
    <property type="match status" value="1"/>
</dbReference>
<dbReference type="SUPFAM" id="SSF69864">
    <property type="entry name" value="Argininosuccinate synthetase, C-terminal domain"/>
    <property type="match status" value="1"/>
</dbReference>
<dbReference type="PROSITE" id="PS00564">
    <property type="entry name" value="ARGININOSUCCIN_SYN_1"/>
    <property type="match status" value="1"/>
</dbReference>
<dbReference type="PROSITE" id="PS00565">
    <property type="entry name" value="ARGININOSUCCIN_SYN_2"/>
    <property type="match status" value="1"/>
</dbReference>
<keyword id="KW-0028">Amino-acid biosynthesis</keyword>
<keyword id="KW-0055">Arginine biosynthesis</keyword>
<keyword id="KW-0067">ATP-binding</keyword>
<keyword id="KW-0963">Cytoplasm</keyword>
<keyword id="KW-0436">Ligase</keyword>
<keyword id="KW-0547">Nucleotide-binding</keyword>
<feature type="chain" id="PRO_1000082403" description="Argininosuccinate synthase">
    <location>
        <begin position="1"/>
        <end position="447"/>
    </location>
</feature>
<feature type="binding site" evidence="1">
    <location>
        <begin position="20"/>
        <end position="28"/>
    </location>
    <ligand>
        <name>ATP</name>
        <dbReference type="ChEBI" id="CHEBI:30616"/>
    </ligand>
</feature>
<feature type="binding site" evidence="1">
    <location>
        <position position="46"/>
    </location>
    <ligand>
        <name>ATP</name>
        <dbReference type="ChEBI" id="CHEBI:30616"/>
    </ligand>
</feature>
<feature type="binding site" evidence="1">
    <location>
        <position position="102"/>
    </location>
    <ligand>
        <name>L-citrulline</name>
        <dbReference type="ChEBI" id="CHEBI:57743"/>
    </ligand>
</feature>
<feature type="binding site" evidence="1">
    <location>
        <position position="132"/>
    </location>
    <ligand>
        <name>ATP</name>
        <dbReference type="ChEBI" id="CHEBI:30616"/>
    </ligand>
</feature>
<feature type="binding site" evidence="1">
    <location>
        <position position="134"/>
    </location>
    <ligand>
        <name>ATP</name>
        <dbReference type="ChEBI" id="CHEBI:30616"/>
    </ligand>
</feature>
<feature type="binding site" evidence="1">
    <location>
        <position position="134"/>
    </location>
    <ligand>
        <name>L-aspartate</name>
        <dbReference type="ChEBI" id="CHEBI:29991"/>
    </ligand>
</feature>
<feature type="binding site" evidence="1">
    <location>
        <position position="138"/>
    </location>
    <ligand>
        <name>L-aspartate</name>
        <dbReference type="ChEBI" id="CHEBI:29991"/>
    </ligand>
</feature>
<feature type="binding site" evidence="1">
    <location>
        <position position="138"/>
    </location>
    <ligand>
        <name>L-citrulline</name>
        <dbReference type="ChEBI" id="CHEBI:57743"/>
    </ligand>
</feature>
<feature type="binding site" evidence="1">
    <location>
        <position position="139"/>
    </location>
    <ligand>
        <name>ATP</name>
        <dbReference type="ChEBI" id="CHEBI:30616"/>
    </ligand>
</feature>
<feature type="binding site" evidence="1">
    <location>
        <position position="139"/>
    </location>
    <ligand>
        <name>L-aspartate</name>
        <dbReference type="ChEBI" id="CHEBI:29991"/>
    </ligand>
</feature>
<feature type="binding site" evidence="1">
    <location>
        <position position="142"/>
    </location>
    <ligand>
        <name>L-citrulline</name>
        <dbReference type="ChEBI" id="CHEBI:57743"/>
    </ligand>
</feature>
<feature type="binding site" evidence="1">
    <location>
        <position position="195"/>
    </location>
    <ligand>
        <name>L-citrulline</name>
        <dbReference type="ChEBI" id="CHEBI:57743"/>
    </ligand>
</feature>
<feature type="binding site" evidence="1">
    <location>
        <position position="197"/>
    </location>
    <ligand>
        <name>ATP</name>
        <dbReference type="ChEBI" id="CHEBI:30616"/>
    </ligand>
</feature>
<feature type="binding site" evidence="1">
    <location>
        <position position="204"/>
    </location>
    <ligand>
        <name>L-citrulline</name>
        <dbReference type="ChEBI" id="CHEBI:57743"/>
    </ligand>
</feature>
<feature type="binding site" evidence="1">
    <location>
        <position position="206"/>
    </location>
    <ligand>
        <name>L-citrulline</name>
        <dbReference type="ChEBI" id="CHEBI:57743"/>
    </ligand>
</feature>
<feature type="binding site" evidence="1">
    <location>
        <position position="283"/>
    </location>
    <ligand>
        <name>L-citrulline</name>
        <dbReference type="ChEBI" id="CHEBI:57743"/>
    </ligand>
</feature>
<proteinExistence type="inferred from homology"/>
<organism>
    <name type="scientific">Neisseria meningitidis serogroup C (strain 053442)</name>
    <dbReference type="NCBI Taxonomy" id="374833"/>
    <lineage>
        <taxon>Bacteria</taxon>
        <taxon>Pseudomonadati</taxon>
        <taxon>Pseudomonadota</taxon>
        <taxon>Betaproteobacteria</taxon>
        <taxon>Neisseriales</taxon>
        <taxon>Neisseriaceae</taxon>
        <taxon>Neisseria</taxon>
    </lineage>
</organism>
<gene>
    <name evidence="1" type="primary">argG</name>
    <name type="ordered locus">NMCC_2087</name>
</gene>
<protein>
    <recommendedName>
        <fullName evidence="1">Argininosuccinate synthase</fullName>
        <ecNumber evidence="1">6.3.4.5</ecNumber>
    </recommendedName>
    <alternativeName>
        <fullName evidence="1">Citrulline--aspartate ligase</fullName>
    </alternativeName>
</protein>